<name>RL15_BAUCH</name>
<protein>
    <recommendedName>
        <fullName evidence="1">Large ribosomal subunit protein uL15</fullName>
    </recommendedName>
    <alternativeName>
        <fullName evidence="3">50S ribosomal protein L15</fullName>
    </alternativeName>
</protein>
<proteinExistence type="inferred from homology"/>
<gene>
    <name evidence="1" type="primary">rplO</name>
    <name type="ordered locus">BCI_0347</name>
</gene>
<keyword id="KW-1185">Reference proteome</keyword>
<keyword id="KW-0687">Ribonucleoprotein</keyword>
<keyword id="KW-0689">Ribosomal protein</keyword>
<keyword id="KW-0694">RNA-binding</keyword>
<keyword id="KW-0699">rRNA-binding</keyword>
<reference key="1">
    <citation type="journal article" date="2006" name="PLoS Biol.">
        <title>Metabolic complementarity and genomics of the dual bacterial symbiosis of sharpshooters.</title>
        <authorList>
            <person name="Wu D."/>
            <person name="Daugherty S.C."/>
            <person name="Van Aken S.E."/>
            <person name="Pai G.H."/>
            <person name="Watkins K.L."/>
            <person name="Khouri H."/>
            <person name="Tallon L.J."/>
            <person name="Zaborsky J.M."/>
            <person name="Dunbar H.E."/>
            <person name="Tran P.L."/>
            <person name="Moran N.A."/>
            <person name="Eisen J.A."/>
        </authorList>
    </citation>
    <scope>NUCLEOTIDE SEQUENCE [LARGE SCALE GENOMIC DNA]</scope>
</reference>
<feature type="chain" id="PRO_0000251489" description="Large ribosomal subunit protein uL15">
    <location>
        <begin position="1"/>
        <end position="143"/>
    </location>
</feature>
<feature type="region of interest" description="Disordered" evidence="2">
    <location>
        <begin position="1"/>
        <end position="48"/>
    </location>
</feature>
<feature type="compositionally biased region" description="Basic residues" evidence="2">
    <location>
        <begin position="11"/>
        <end position="20"/>
    </location>
</feature>
<feature type="compositionally biased region" description="Gly residues" evidence="2">
    <location>
        <begin position="21"/>
        <end position="31"/>
    </location>
</feature>
<organism>
    <name type="scientific">Baumannia cicadellinicola subsp. Homalodisca coagulata</name>
    <dbReference type="NCBI Taxonomy" id="374463"/>
    <lineage>
        <taxon>Bacteria</taxon>
        <taxon>Pseudomonadati</taxon>
        <taxon>Pseudomonadota</taxon>
        <taxon>Gammaproteobacteria</taxon>
        <taxon>Candidatus Palibaumannia</taxon>
    </lineage>
</organism>
<accession>Q1LTB9</accession>
<sequence>MRLNTISPSKGAKHSSKRLGRGIGSGLGKTSGRGHKGQKARSGCSIHRGFEGGQTPLYRRLPKFGFTSCKATVTTEIRLADLSKLQDNLIDLKTLKKANIIPKKIKWVKIILTGDIKRAITVRSLRVSKGAKLAIEAAGGKIE</sequence>
<dbReference type="EMBL" id="CP000238">
    <property type="protein sequence ID" value="ABF13806.1"/>
    <property type="molecule type" value="Genomic_DNA"/>
</dbReference>
<dbReference type="RefSeq" id="WP_011520528.1">
    <property type="nucleotide sequence ID" value="NC_007984.1"/>
</dbReference>
<dbReference type="SMR" id="Q1LTB9"/>
<dbReference type="STRING" id="374463.BCI_0347"/>
<dbReference type="KEGG" id="bci:BCI_0347"/>
<dbReference type="HOGENOM" id="CLU_055188_4_2_6"/>
<dbReference type="OrthoDB" id="9810293at2"/>
<dbReference type="Proteomes" id="UP000002427">
    <property type="component" value="Chromosome"/>
</dbReference>
<dbReference type="GO" id="GO:0022625">
    <property type="term" value="C:cytosolic large ribosomal subunit"/>
    <property type="evidence" value="ECO:0007669"/>
    <property type="project" value="TreeGrafter"/>
</dbReference>
<dbReference type="GO" id="GO:0019843">
    <property type="term" value="F:rRNA binding"/>
    <property type="evidence" value="ECO:0007669"/>
    <property type="project" value="UniProtKB-UniRule"/>
</dbReference>
<dbReference type="GO" id="GO:0003735">
    <property type="term" value="F:structural constituent of ribosome"/>
    <property type="evidence" value="ECO:0007669"/>
    <property type="project" value="InterPro"/>
</dbReference>
<dbReference type="GO" id="GO:0006412">
    <property type="term" value="P:translation"/>
    <property type="evidence" value="ECO:0007669"/>
    <property type="project" value="UniProtKB-UniRule"/>
</dbReference>
<dbReference type="Gene3D" id="3.100.10.10">
    <property type="match status" value="1"/>
</dbReference>
<dbReference type="HAMAP" id="MF_01341">
    <property type="entry name" value="Ribosomal_uL15"/>
    <property type="match status" value="1"/>
</dbReference>
<dbReference type="InterPro" id="IPR030878">
    <property type="entry name" value="Ribosomal_uL15"/>
</dbReference>
<dbReference type="InterPro" id="IPR021131">
    <property type="entry name" value="Ribosomal_uL15/eL18"/>
</dbReference>
<dbReference type="InterPro" id="IPR036227">
    <property type="entry name" value="Ribosomal_uL15/eL18_sf"/>
</dbReference>
<dbReference type="InterPro" id="IPR005749">
    <property type="entry name" value="Ribosomal_uL15_bac-type"/>
</dbReference>
<dbReference type="InterPro" id="IPR001196">
    <property type="entry name" value="Ribosomal_uL15_CS"/>
</dbReference>
<dbReference type="NCBIfam" id="TIGR01071">
    <property type="entry name" value="rplO_bact"/>
    <property type="match status" value="1"/>
</dbReference>
<dbReference type="PANTHER" id="PTHR12934">
    <property type="entry name" value="50S RIBOSOMAL PROTEIN L15"/>
    <property type="match status" value="1"/>
</dbReference>
<dbReference type="PANTHER" id="PTHR12934:SF11">
    <property type="entry name" value="LARGE RIBOSOMAL SUBUNIT PROTEIN UL15M"/>
    <property type="match status" value="1"/>
</dbReference>
<dbReference type="Pfam" id="PF00828">
    <property type="entry name" value="Ribosomal_L27A"/>
    <property type="match status" value="1"/>
</dbReference>
<dbReference type="SUPFAM" id="SSF52080">
    <property type="entry name" value="Ribosomal proteins L15p and L18e"/>
    <property type="match status" value="1"/>
</dbReference>
<dbReference type="PROSITE" id="PS00475">
    <property type="entry name" value="RIBOSOMAL_L15"/>
    <property type="match status" value="1"/>
</dbReference>
<evidence type="ECO:0000255" key="1">
    <source>
        <dbReference type="HAMAP-Rule" id="MF_01341"/>
    </source>
</evidence>
<evidence type="ECO:0000256" key="2">
    <source>
        <dbReference type="SAM" id="MobiDB-lite"/>
    </source>
</evidence>
<evidence type="ECO:0000305" key="3"/>
<comment type="function">
    <text evidence="1">Binds to the 23S rRNA.</text>
</comment>
<comment type="subunit">
    <text evidence="1">Part of the 50S ribosomal subunit.</text>
</comment>
<comment type="similarity">
    <text evidence="1">Belongs to the universal ribosomal protein uL15 family.</text>
</comment>